<name>NANE1_SALTY</name>
<evidence type="ECO:0000305" key="1"/>
<comment type="function">
    <text evidence="1">Converts N-acetylmannosamine-6-phosphate (ManNAc-6-P) to N-acetylglucosamine-6-phosphate (GlcNAc-6-P).</text>
</comment>
<comment type="catalytic activity">
    <reaction>
        <text>an N-acyl-D-glucosamine 6-phosphate = an N-acyl-D-mannosamine 6-phosphate</text>
        <dbReference type="Rhea" id="RHEA:23932"/>
        <dbReference type="ChEBI" id="CHEBI:57599"/>
        <dbReference type="ChEBI" id="CHEBI:57666"/>
        <dbReference type="EC" id="5.1.3.9"/>
    </reaction>
</comment>
<comment type="pathway">
    <text>Amino-sugar metabolism; N-acetylneuraminate degradation; D-fructose 6-phosphate from N-acetylneuraminate: step 3/5.</text>
</comment>
<comment type="similarity">
    <text evidence="1">Belongs to the NanE family.</text>
</comment>
<dbReference type="EC" id="5.1.3.9"/>
<dbReference type="EMBL" id="AE006468">
    <property type="protein sequence ID" value="AAL20060.1"/>
    <property type="molecule type" value="Genomic_DNA"/>
</dbReference>
<dbReference type="RefSeq" id="NP_460101.1">
    <property type="nucleotide sequence ID" value="NC_003197.2"/>
</dbReference>
<dbReference type="RefSeq" id="WP_000054243.1">
    <property type="nucleotide sequence ID" value="NC_003197.2"/>
</dbReference>
<dbReference type="SMR" id="P60631"/>
<dbReference type="STRING" id="99287.STM1129"/>
<dbReference type="PaxDb" id="99287-STM1129"/>
<dbReference type="GeneID" id="1252647"/>
<dbReference type="KEGG" id="stm:STM1129"/>
<dbReference type="PATRIC" id="fig|99287.12.peg.1196"/>
<dbReference type="HOGENOM" id="CLU_086300_0_0_6"/>
<dbReference type="OMA" id="QALGFDC"/>
<dbReference type="PhylomeDB" id="P60631"/>
<dbReference type="BioCyc" id="SENT99287:STM1129-MONOMER"/>
<dbReference type="UniPathway" id="UPA00629">
    <property type="reaction ID" value="UER00682"/>
</dbReference>
<dbReference type="Proteomes" id="UP000001014">
    <property type="component" value="Chromosome"/>
</dbReference>
<dbReference type="GO" id="GO:0005829">
    <property type="term" value="C:cytosol"/>
    <property type="evidence" value="ECO:0000318"/>
    <property type="project" value="GO_Central"/>
</dbReference>
<dbReference type="GO" id="GO:0047465">
    <property type="term" value="F:N-acylglucosamine-6-phosphate 2-epimerase activity"/>
    <property type="evidence" value="ECO:0007669"/>
    <property type="project" value="UniProtKB-EC"/>
</dbReference>
<dbReference type="GO" id="GO:0005975">
    <property type="term" value="P:carbohydrate metabolic process"/>
    <property type="evidence" value="ECO:0007669"/>
    <property type="project" value="UniProtKB-UniRule"/>
</dbReference>
<dbReference type="GO" id="GO:0006053">
    <property type="term" value="P:N-acetylmannosamine catabolic process"/>
    <property type="evidence" value="ECO:0000318"/>
    <property type="project" value="GO_Central"/>
</dbReference>
<dbReference type="GO" id="GO:0019262">
    <property type="term" value="P:N-acetylneuraminate catabolic process"/>
    <property type="evidence" value="ECO:0000318"/>
    <property type="project" value="GO_Central"/>
</dbReference>
<dbReference type="CDD" id="cd04729">
    <property type="entry name" value="NanE"/>
    <property type="match status" value="1"/>
</dbReference>
<dbReference type="FunFam" id="3.20.20.70:FF:000035">
    <property type="entry name" value="Putative N-acetylmannosamine-6-phosphate 2-epimerase"/>
    <property type="match status" value="1"/>
</dbReference>
<dbReference type="Gene3D" id="3.20.20.70">
    <property type="entry name" value="Aldolase class I"/>
    <property type="match status" value="1"/>
</dbReference>
<dbReference type="HAMAP" id="MF_01235">
    <property type="entry name" value="ManNAc6P_epimer"/>
    <property type="match status" value="1"/>
</dbReference>
<dbReference type="InterPro" id="IPR013785">
    <property type="entry name" value="Aldolase_TIM"/>
</dbReference>
<dbReference type="InterPro" id="IPR007260">
    <property type="entry name" value="NanE"/>
</dbReference>
<dbReference type="InterPro" id="IPR011060">
    <property type="entry name" value="RibuloseP-bd_barrel"/>
</dbReference>
<dbReference type="NCBIfam" id="NF002231">
    <property type="entry name" value="PRK01130.1"/>
    <property type="match status" value="1"/>
</dbReference>
<dbReference type="PANTHER" id="PTHR36204">
    <property type="entry name" value="N-ACETYLMANNOSAMINE-6-PHOSPHATE 2-EPIMERASE-RELATED"/>
    <property type="match status" value="1"/>
</dbReference>
<dbReference type="PANTHER" id="PTHR36204:SF1">
    <property type="entry name" value="N-ACETYLMANNOSAMINE-6-PHOSPHATE 2-EPIMERASE-RELATED"/>
    <property type="match status" value="1"/>
</dbReference>
<dbReference type="Pfam" id="PF04131">
    <property type="entry name" value="NanE"/>
    <property type="match status" value="1"/>
</dbReference>
<dbReference type="SUPFAM" id="SSF51366">
    <property type="entry name" value="Ribulose-phoshate binding barrel"/>
    <property type="match status" value="1"/>
</dbReference>
<feature type="chain" id="PRO_0000179794" description="Putative N-acetylmannosamine-6-phosphate 2-epimerase 1">
    <location>
        <begin position="1"/>
        <end position="226"/>
    </location>
</feature>
<keyword id="KW-0119">Carbohydrate metabolism</keyword>
<keyword id="KW-0413">Isomerase</keyword>
<keyword id="KW-1185">Reference proteome</keyword>
<reference key="1">
    <citation type="journal article" date="2001" name="Nature">
        <title>Complete genome sequence of Salmonella enterica serovar Typhimurium LT2.</title>
        <authorList>
            <person name="McClelland M."/>
            <person name="Sanderson K.E."/>
            <person name="Spieth J."/>
            <person name="Clifton S.W."/>
            <person name="Latreille P."/>
            <person name="Courtney L."/>
            <person name="Porwollik S."/>
            <person name="Ali J."/>
            <person name="Dante M."/>
            <person name="Du F."/>
            <person name="Hou S."/>
            <person name="Layman D."/>
            <person name="Leonard S."/>
            <person name="Nguyen C."/>
            <person name="Scott K."/>
            <person name="Holmes A."/>
            <person name="Grewal N."/>
            <person name="Mulvaney E."/>
            <person name="Ryan E."/>
            <person name="Sun H."/>
            <person name="Florea L."/>
            <person name="Miller W."/>
            <person name="Stoneking T."/>
            <person name="Nhan M."/>
            <person name="Waterston R."/>
            <person name="Wilson R.K."/>
        </authorList>
    </citation>
    <scope>NUCLEOTIDE SEQUENCE [LARGE SCALE GENOMIC DNA]</scope>
    <source>
        <strain>LT2 / SGSC1412 / ATCC 700720</strain>
    </source>
</reference>
<protein>
    <recommendedName>
        <fullName>Putative N-acetylmannosamine-6-phosphate 2-epimerase 1</fullName>
        <ecNumber>5.1.3.9</ecNumber>
    </recommendedName>
    <alternativeName>
        <fullName>ManNAc-6-P epimerase 1</fullName>
    </alternativeName>
</protein>
<organism>
    <name type="scientific">Salmonella typhimurium (strain LT2 / SGSC1412 / ATCC 700720)</name>
    <dbReference type="NCBI Taxonomy" id="99287"/>
    <lineage>
        <taxon>Bacteria</taxon>
        <taxon>Pseudomonadati</taxon>
        <taxon>Pseudomonadota</taxon>
        <taxon>Gammaproteobacteria</taxon>
        <taxon>Enterobacterales</taxon>
        <taxon>Enterobacteriaceae</taxon>
        <taxon>Salmonella</taxon>
    </lineage>
</organism>
<sequence length="226" mass="23973">MSLLARLEQSVHENGGLIVSCQPVPGSPMDKPEIVAAMAQAAASAGAVAVRIEGIENLRTVRPHLSVPIIGIIKRDLTGSPVRITPYLQDVDALAQAGADIIAFDASFRSRPVDIDSLLTRIRLHGLLAMADCSTVNEGISCHQKGIEFIGTTLSGYTGPITPVEPDLAMVTQLSHAGCRVIAEGRYNTPALAANAIEHGAWAVTVGSAITRIEHICQWFSHAVKR</sequence>
<gene>
    <name type="primary">nanE1</name>
    <name type="ordered locus">STM1129</name>
</gene>
<accession>P60631</accession>
<accession>Q8XG90</accession>
<proteinExistence type="inferred from homology"/>